<comment type="function">
    <text evidence="1">Catalyzes the ATP-dependent phosphorylation of the 3-deoxy-D-manno-octulosonic acid (Kdo) residue in Kdo-lipid IV(A) at the 4-OH position.</text>
</comment>
<comment type="catalytic activity">
    <reaction evidence="1">
        <text>an alpha-Kdo-(2-&gt;6)-lipid IVA + ATP = a 4-O-phospho-alpha-Kdo-(2-&gt;6)-lipid IVA + ADP + H(+)</text>
        <dbReference type="Rhea" id="RHEA:74271"/>
        <dbReference type="ChEBI" id="CHEBI:15378"/>
        <dbReference type="ChEBI" id="CHEBI:30616"/>
        <dbReference type="ChEBI" id="CHEBI:176428"/>
        <dbReference type="ChEBI" id="CHEBI:193140"/>
        <dbReference type="ChEBI" id="CHEBI:456216"/>
        <dbReference type="EC" id="2.7.1.166"/>
    </reaction>
</comment>
<comment type="pathway">
    <text evidence="1">Bacterial outer membrane biogenesis; LPS core biosynthesis.</text>
</comment>
<comment type="subcellular location">
    <subcellularLocation>
        <location evidence="1">Cell inner membrane</location>
        <topology evidence="1">Peripheral membrane protein</topology>
        <orientation evidence="1">Cytoplasmic side</orientation>
    </subcellularLocation>
</comment>
<comment type="similarity">
    <text evidence="1">Belongs to the protein kinase superfamily. KdkA/RfaP family.</text>
</comment>
<organism>
    <name type="scientific">Vibrio vulnificus (strain YJ016)</name>
    <dbReference type="NCBI Taxonomy" id="196600"/>
    <lineage>
        <taxon>Bacteria</taxon>
        <taxon>Pseudomonadati</taxon>
        <taxon>Pseudomonadota</taxon>
        <taxon>Gammaproteobacteria</taxon>
        <taxon>Vibrionales</taxon>
        <taxon>Vibrionaceae</taxon>
        <taxon>Vibrio</taxon>
    </lineage>
</organism>
<name>KDKA_VIBVY</name>
<sequence length="236" mass="27508">MIEQQQFGQSRICYDSEWVSSPELALFDPQYWQAQNKVVGSATGRGTTWFVQLPKITAALRHYRRGGLFGKLVKDHYWFRSWSATRSFAEFHLLKQLREAGVNVPRPIAAYAMRKGLFYQADLLSERIANAQDLVTILQKHSLNAELYQKIGVEIAKMHRVGVNHTDLNIHNILIDAQETIWIIDFDKCYPQAGDGWKQENLDRLKRSFNKERVKRSIHWHDKDFQALLTGYESQQ</sequence>
<proteinExistence type="inferred from homology"/>
<keyword id="KW-0067">ATP-binding</keyword>
<keyword id="KW-0997">Cell inner membrane</keyword>
<keyword id="KW-1003">Cell membrane</keyword>
<keyword id="KW-0418">Kinase</keyword>
<keyword id="KW-0448">Lipopolysaccharide biosynthesis</keyword>
<keyword id="KW-0472">Membrane</keyword>
<keyword id="KW-0547">Nucleotide-binding</keyword>
<keyword id="KW-0808">Transferase</keyword>
<feature type="chain" id="PRO_0000194319" description="3-deoxy-D-manno-octulosonic acid kinase">
    <location>
        <begin position="1"/>
        <end position="236"/>
    </location>
</feature>
<feature type="active site" evidence="1">
    <location>
        <position position="167"/>
    </location>
</feature>
<dbReference type="EC" id="2.7.1.166" evidence="1"/>
<dbReference type="EMBL" id="BA000037">
    <property type="protein sequence ID" value="BAC93061.1"/>
    <property type="molecule type" value="Genomic_DNA"/>
</dbReference>
<dbReference type="RefSeq" id="WP_011149270.1">
    <property type="nucleotide sequence ID" value="NC_005139.1"/>
</dbReference>
<dbReference type="SMR" id="Q7MPR5"/>
<dbReference type="STRING" id="672.VV93_v1c02880"/>
<dbReference type="KEGG" id="vvy:VV0297"/>
<dbReference type="PATRIC" id="fig|196600.6.peg.331"/>
<dbReference type="eggNOG" id="COG3642">
    <property type="taxonomic scope" value="Bacteria"/>
</dbReference>
<dbReference type="HOGENOM" id="CLU_094226_0_0_6"/>
<dbReference type="UniPathway" id="UPA00958"/>
<dbReference type="Proteomes" id="UP000002675">
    <property type="component" value="Chromosome I"/>
</dbReference>
<dbReference type="GO" id="GO:0005886">
    <property type="term" value="C:plasma membrane"/>
    <property type="evidence" value="ECO:0007669"/>
    <property type="project" value="UniProtKB-SubCell"/>
</dbReference>
<dbReference type="GO" id="GO:0005524">
    <property type="term" value="F:ATP binding"/>
    <property type="evidence" value="ECO:0007669"/>
    <property type="project" value="UniProtKB-UniRule"/>
</dbReference>
<dbReference type="GO" id="GO:0016301">
    <property type="term" value="F:kinase activity"/>
    <property type="evidence" value="ECO:0007669"/>
    <property type="project" value="UniProtKB-KW"/>
</dbReference>
<dbReference type="GO" id="GO:0016773">
    <property type="term" value="F:phosphotransferase activity, alcohol group as acceptor"/>
    <property type="evidence" value="ECO:0007669"/>
    <property type="project" value="UniProtKB-UniRule"/>
</dbReference>
<dbReference type="GO" id="GO:0009244">
    <property type="term" value="P:lipopolysaccharide core region biosynthetic process"/>
    <property type="evidence" value="ECO:0007669"/>
    <property type="project" value="UniProtKB-UniRule"/>
</dbReference>
<dbReference type="Gene3D" id="1.10.510.10">
    <property type="entry name" value="Transferase(Phosphotransferase) domain 1"/>
    <property type="match status" value="1"/>
</dbReference>
<dbReference type="HAMAP" id="MF_00521">
    <property type="entry name" value="KDO_kinase"/>
    <property type="match status" value="1"/>
</dbReference>
<dbReference type="InterPro" id="IPR022826">
    <property type="entry name" value="KDO_kinase"/>
</dbReference>
<dbReference type="InterPro" id="IPR011009">
    <property type="entry name" value="Kinase-like_dom_sf"/>
</dbReference>
<dbReference type="NCBIfam" id="NF002475">
    <property type="entry name" value="PRK01723.1"/>
    <property type="match status" value="1"/>
</dbReference>
<dbReference type="Pfam" id="PF06293">
    <property type="entry name" value="Kdo"/>
    <property type="match status" value="1"/>
</dbReference>
<dbReference type="SUPFAM" id="SSF56112">
    <property type="entry name" value="Protein kinase-like (PK-like)"/>
    <property type="match status" value="1"/>
</dbReference>
<accession>Q7MPR5</accession>
<protein>
    <recommendedName>
        <fullName evidence="1">3-deoxy-D-manno-octulosonic acid kinase</fullName>
        <shortName evidence="1">Kdo kinase</shortName>
        <ecNumber evidence="1">2.7.1.166</ecNumber>
    </recommendedName>
</protein>
<reference key="1">
    <citation type="journal article" date="2003" name="Genome Res.">
        <title>Comparative genome analysis of Vibrio vulnificus, a marine pathogen.</title>
        <authorList>
            <person name="Chen C.-Y."/>
            <person name="Wu K.-M."/>
            <person name="Chang Y.-C."/>
            <person name="Chang C.-H."/>
            <person name="Tsai H.-C."/>
            <person name="Liao T.-L."/>
            <person name="Liu Y.-M."/>
            <person name="Chen H.-J."/>
            <person name="Shen A.B.-T."/>
            <person name="Li J.-C."/>
            <person name="Su T.-L."/>
            <person name="Shao C.-P."/>
            <person name="Lee C.-T."/>
            <person name="Hor L.-I."/>
            <person name="Tsai S.-F."/>
        </authorList>
    </citation>
    <scope>NUCLEOTIDE SEQUENCE [LARGE SCALE GENOMIC DNA]</scope>
    <source>
        <strain>YJ016</strain>
    </source>
</reference>
<evidence type="ECO:0000255" key="1">
    <source>
        <dbReference type="HAMAP-Rule" id="MF_00521"/>
    </source>
</evidence>
<gene>
    <name evidence="1" type="primary">kdkA</name>
    <name type="ordered locus">VV0297</name>
</gene>